<feature type="chain" id="PRO_0000306863" description="Pleckstrin homology domain-containing family G member 3">
    <location>
        <begin position="1"/>
        <end position="1219"/>
    </location>
</feature>
<feature type="domain" description="DH" evidence="2">
    <location>
        <begin position="93"/>
        <end position="272"/>
    </location>
</feature>
<feature type="domain" description="PH" evidence="3">
    <location>
        <begin position="296"/>
        <end position="394"/>
    </location>
</feature>
<feature type="region of interest" description="Disordered" evidence="4">
    <location>
        <begin position="1"/>
        <end position="66"/>
    </location>
</feature>
<feature type="region of interest" description="Disordered" evidence="4">
    <location>
        <begin position="431"/>
        <end position="599"/>
    </location>
</feature>
<feature type="region of interest" description="Disordered" evidence="4">
    <location>
        <begin position="613"/>
        <end position="708"/>
    </location>
</feature>
<feature type="region of interest" description="Disordered" evidence="4">
    <location>
        <begin position="756"/>
        <end position="780"/>
    </location>
</feature>
<feature type="region of interest" description="Disordered" evidence="4">
    <location>
        <begin position="821"/>
        <end position="840"/>
    </location>
</feature>
<feature type="region of interest" description="Disordered" evidence="4">
    <location>
        <begin position="859"/>
        <end position="878"/>
    </location>
</feature>
<feature type="region of interest" description="Disordered" evidence="4">
    <location>
        <begin position="955"/>
        <end position="1133"/>
    </location>
</feature>
<feature type="region of interest" description="Disordered" evidence="4">
    <location>
        <begin position="1146"/>
        <end position="1207"/>
    </location>
</feature>
<feature type="compositionally biased region" description="Polar residues" evidence="4">
    <location>
        <begin position="1"/>
        <end position="10"/>
    </location>
</feature>
<feature type="compositionally biased region" description="Low complexity" evidence="4">
    <location>
        <begin position="18"/>
        <end position="46"/>
    </location>
</feature>
<feature type="compositionally biased region" description="Polar residues" evidence="4">
    <location>
        <begin position="431"/>
        <end position="442"/>
    </location>
</feature>
<feature type="compositionally biased region" description="Basic and acidic residues" evidence="4">
    <location>
        <begin position="446"/>
        <end position="463"/>
    </location>
</feature>
<feature type="compositionally biased region" description="Low complexity" evidence="4">
    <location>
        <begin position="630"/>
        <end position="645"/>
    </location>
</feature>
<feature type="compositionally biased region" description="Basic and acidic residues" evidence="4">
    <location>
        <begin position="696"/>
        <end position="708"/>
    </location>
</feature>
<feature type="compositionally biased region" description="Gly residues" evidence="4">
    <location>
        <begin position="826"/>
        <end position="836"/>
    </location>
</feature>
<feature type="compositionally biased region" description="Low complexity" evidence="4">
    <location>
        <begin position="859"/>
        <end position="873"/>
    </location>
</feature>
<feature type="compositionally biased region" description="Polar residues" evidence="4">
    <location>
        <begin position="1020"/>
        <end position="1029"/>
    </location>
</feature>
<feature type="compositionally biased region" description="Basic and acidic residues" evidence="4">
    <location>
        <begin position="1049"/>
        <end position="1065"/>
    </location>
</feature>
<feature type="compositionally biased region" description="Basic and acidic residues" evidence="4">
    <location>
        <begin position="1187"/>
        <end position="1197"/>
    </location>
</feature>
<feature type="modified residue" description="Phosphoserine" evidence="11 12 13 14">
    <location>
        <position position="76"/>
    </location>
</feature>
<feature type="modified residue" description="Phosphoserine" evidence="1">
    <location>
        <position position="433"/>
    </location>
</feature>
<feature type="modified residue" description="Phosphoserine" evidence="11 12 13">
    <location>
        <position position="576"/>
    </location>
</feature>
<feature type="modified residue" description="Phosphoserine" evidence="11 12 13">
    <location>
        <position position="577"/>
    </location>
</feature>
<feature type="modified residue" description="Phosphoserine" evidence="1">
    <location>
        <position position="618"/>
    </location>
</feature>
<feature type="modified residue" description="Phosphoserine" evidence="13 14">
    <location>
        <position position="631"/>
    </location>
</feature>
<feature type="modified residue" description="Phosphoserine" evidence="13 14">
    <location>
        <position position="640"/>
    </location>
</feature>
<feature type="modified residue" description="Phosphoserine" evidence="11 13 14">
    <location>
        <position position="643"/>
    </location>
</feature>
<feature type="modified residue" description="Phosphoserine" evidence="11 13 14">
    <location>
        <position position="647"/>
    </location>
</feature>
<feature type="modified residue" description="Phosphoserine" evidence="11 13 14 16">
    <location>
        <position position="741"/>
    </location>
</feature>
<feature type="modified residue" description="Phosphoserine" evidence="1">
    <location>
        <position position="779"/>
    </location>
</feature>
<feature type="modified residue" description="Phosphoserine" evidence="13 14">
    <location>
        <position position="827"/>
    </location>
</feature>
<feature type="modified residue" description="Phosphoserine" evidence="11">
    <location>
        <position position="962"/>
    </location>
</feature>
<feature type="modified residue" description="Phosphoserine" evidence="16">
    <location>
        <position position="1011"/>
    </location>
</feature>
<feature type="modified residue" description="Phosphoserine" evidence="1">
    <location>
        <position position="1023"/>
    </location>
</feature>
<feature type="modified residue" description="Phosphoserine" evidence="11 12 13 14">
    <location>
        <position position="1037"/>
    </location>
</feature>
<feature type="modified residue" description="Phosphoserine" evidence="11 12 13 14">
    <location>
        <position position="1040"/>
    </location>
</feature>
<feature type="modified residue" description="Phosphoserine" evidence="14">
    <location>
        <position position="1081"/>
    </location>
</feature>
<feature type="modified residue" description="Omega-N-methylarginine" evidence="15">
    <location>
        <position position="1107"/>
    </location>
</feature>
<feature type="splice variant" id="VSP_028533" description="In isoform 2." evidence="7">
    <location>
        <begin position="1"/>
        <end position="466"/>
    </location>
</feature>
<feature type="splice variant" id="VSP_028534" description="In isoform 3." evidence="8">
    <location>
        <begin position="118"/>
        <end position="173"/>
    </location>
</feature>
<feature type="splice variant" id="VSP_041513" description="In isoform 2." evidence="7">
    <original>MK</original>
    <variation>M</variation>
    <location>
        <begin position="467"/>
        <end position="468"/>
    </location>
</feature>
<feature type="sequence variant" id="VAR_061518" description="In dbSNP:rs41309246.">
    <original>R</original>
    <variation>H</variation>
    <location>
        <position position="1014"/>
    </location>
</feature>
<feature type="sequence variant" id="VAR_035330" description="In dbSNP:rs229649." evidence="5">
    <original>R</original>
    <variation>W</variation>
    <location>
        <position position="1036"/>
    </location>
</feature>
<feature type="sequence conflict" description="In Ref. 2; AAH04298." evidence="9" ref="2">
    <original>QGRRQSEPTKHLLRQLNEKARAAGMK</original>
    <variation>KGAGPEPPGSEEEEEEQEESLAVAEQ</variation>
    <location>
        <begin position="443"/>
        <end position="468"/>
    </location>
</feature>
<feature type="sequence conflict" description="In Ref. 2; AAH73907." evidence="9" ref="2">
    <original>KARAAGMK</original>
    <variation>ESLAVAEQ</variation>
    <location>
        <begin position="461"/>
        <end position="468"/>
    </location>
</feature>
<feature type="sequence conflict" description="In Ref. 2; AAH04298." evidence="9" ref="2">
    <original>YYENAEHHDAGFSV</original>
    <variation>WWPHCTPASCSSPT</variation>
    <location>
        <begin position="723"/>
        <end position="736"/>
    </location>
</feature>
<feature type="sequence conflict" description="In Ref. 2; AAI29953." evidence="9" ref="2">
    <original>R</original>
    <variation>S</variation>
    <location>
        <position position="921"/>
    </location>
</feature>
<keyword id="KW-0025">Alternative splicing</keyword>
<keyword id="KW-0963">Cytoplasm</keyword>
<keyword id="KW-0206">Cytoskeleton</keyword>
<keyword id="KW-0488">Methylation</keyword>
<keyword id="KW-0597">Phosphoprotein</keyword>
<keyword id="KW-1267">Proteomics identification</keyword>
<keyword id="KW-1185">Reference proteome</keyword>
<reference key="1">
    <citation type="journal article" date="2003" name="Nature">
        <title>The DNA sequence and analysis of human chromosome 14.</title>
        <authorList>
            <person name="Heilig R."/>
            <person name="Eckenberg R."/>
            <person name="Petit J.-L."/>
            <person name="Fonknechten N."/>
            <person name="Da Silva C."/>
            <person name="Cattolico L."/>
            <person name="Levy M."/>
            <person name="Barbe V."/>
            <person name="De Berardinis V."/>
            <person name="Ureta-Vidal A."/>
            <person name="Pelletier E."/>
            <person name="Vico V."/>
            <person name="Anthouard V."/>
            <person name="Rowen L."/>
            <person name="Madan A."/>
            <person name="Qin S."/>
            <person name="Sun H."/>
            <person name="Du H."/>
            <person name="Pepin K."/>
            <person name="Artiguenave F."/>
            <person name="Robert C."/>
            <person name="Cruaud C."/>
            <person name="Bruels T."/>
            <person name="Jaillon O."/>
            <person name="Friedlander L."/>
            <person name="Samson G."/>
            <person name="Brottier P."/>
            <person name="Cure S."/>
            <person name="Segurens B."/>
            <person name="Aniere F."/>
            <person name="Samain S."/>
            <person name="Crespeau H."/>
            <person name="Abbasi N."/>
            <person name="Aiach N."/>
            <person name="Boscus D."/>
            <person name="Dickhoff R."/>
            <person name="Dors M."/>
            <person name="Dubois I."/>
            <person name="Friedman C."/>
            <person name="Gouyvenoux M."/>
            <person name="James R."/>
            <person name="Madan A."/>
            <person name="Mairey-Estrada B."/>
            <person name="Mangenot S."/>
            <person name="Martins N."/>
            <person name="Menard M."/>
            <person name="Oztas S."/>
            <person name="Ratcliffe A."/>
            <person name="Shaffer T."/>
            <person name="Trask B."/>
            <person name="Vacherie B."/>
            <person name="Bellemere C."/>
            <person name="Belser C."/>
            <person name="Besnard-Gonnet M."/>
            <person name="Bartol-Mavel D."/>
            <person name="Boutard M."/>
            <person name="Briez-Silla S."/>
            <person name="Combette S."/>
            <person name="Dufosse-Laurent V."/>
            <person name="Ferron C."/>
            <person name="Lechaplais C."/>
            <person name="Louesse C."/>
            <person name="Muselet D."/>
            <person name="Magdelenat G."/>
            <person name="Pateau E."/>
            <person name="Petit E."/>
            <person name="Sirvain-Trukniewicz P."/>
            <person name="Trybou A."/>
            <person name="Vega-Czarny N."/>
            <person name="Bataille E."/>
            <person name="Bluet E."/>
            <person name="Bordelais I."/>
            <person name="Dubois M."/>
            <person name="Dumont C."/>
            <person name="Guerin T."/>
            <person name="Haffray S."/>
            <person name="Hammadi R."/>
            <person name="Muanga J."/>
            <person name="Pellouin V."/>
            <person name="Robert D."/>
            <person name="Wunderle E."/>
            <person name="Gauguet G."/>
            <person name="Roy A."/>
            <person name="Sainte-Marthe L."/>
            <person name="Verdier J."/>
            <person name="Verdier-Discala C."/>
            <person name="Hillier L.W."/>
            <person name="Fulton L."/>
            <person name="McPherson J."/>
            <person name="Matsuda F."/>
            <person name="Wilson R."/>
            <person name="Scarpelli C."/>
            <person name="Gyapay G."/>
            <person name="Wincker P."/>
            <person name="Saurin W."/>
            <person name="Quetier F."/>
            <person name="Waterston R."/>
            <person name="Hood L."/>
            <person name="Weissenbach J."/>
        </authorList>
    </citation>
    <scope>NUCLEOTIDE SEQUENCE [LARGE SCALE GENOMIC DNA]</scope>
</reference>
<reference key="2">
    <citation type="journal article" date="2004" name="Genome Res.">
        <title>The status, quality, and expansion of the NIH full-length cDNA project: the Mammalian Gene Collection (MGC).</title>
        <authorList>
            <consortium name="The MGC Project Team"/>
        </authorList>
    </citation>
    <scope>NUCLEOTIDE SEQUENCE [LARGE SCALE MRNA] (ISOFORMS 1 AND 2)</scope>
    <scope>VARIANT TRP-1036</scope>
    <source>
        <tissue>Brain</tissue>
        <tissue>Lung</tissue>
        <tissue>Pancreas</tissue>
        <tissue>Urinary bladder</tissue>
    </source>
</reference>
<reference key="3">
    <citation type="submission" date="2003-02" db="EMBL/GenBank/DDBJ databases">
        <title>Full-length cDNA libraries and normalization.</title>
        <authorList>
            <person name="Li W.B."/>
            <person name="Gruber C."/>
            <person name="Jessee J."/>
            <person name="Polayes D."/>
        </authorList>
    </citation>
    <scope>NUCLEOTIDE SEQUENCE [LARGE SCALE MRNA] OF 1-659 (ISOFORM 3)</scope>
    <source>
        <tissue>Cervix carcinoma</tissue>
    </source>
</reference>
<reference key="4">
    <citation type="submission" date="2002-01" db="EMBL/GenBank/DDBJ databases">
        <title>The nucleotide sequence of a long cDNA clone isolated from human spleen.</title>
        <authorList>
            <person name="Jikuya H."/>
            <person name="Takano J."/>
            <person name="Nomura N."/>
            <person name="Kikuno R."/>
            <person name="Nagase T."/>
            <person name="Ohara O."/>
        </authorList>
    </citation>
    <scope>NUCLEOTIDE SEQUENCE [LARGE SCALE MRNA] OF 177-1219 (ISOFORM 1)</scope>
    <source>
        <tissue>Spleen</tissue>
    </source>
</reference>
<reference key="5">
    <citation type="journal article" date="1997" name="DNA Res.">
        <title>Characterization of cDNA clones in size-fractionated cDNA libraries from human brain.</title>
        <authorList>
            <person name="Seki N."/>
            <person name="Ohira M."/>
            <person name="Nagase T."/>
            <person name="Ishikawa K."/>
            <person name="Miyajima N."/>
            <person name="Nakajima D."/>
            <person name="Nomura N."/>
            <person name="Ohara O."/>
        </authorList>
    </citation>
    <scope>NUCLEOTIDE SEQUENCE [LARGE SCALE MRNA] OF 523-1219</scope>
    <source>
        <tissue>Brain</tissue>
    </source>
</reference>
<reference key="6">
    <citation type="journal article" date="2008" name="Proc. Natl. Acad. Sci. U.S.A.">
        <title>A quantitative atlas of mitotic phosphorylation.</title>
        <authorList>
            <person name="Dephoure N."/>
            <person name="Zhou C."/>
            <person name="Villen J."/>
            <person name="Beausoleil S.A."/>
            <person name="Bakalarski C.E."/>
            <person name="Elledge S.J."/>
            <person name="Gygi S.P."/>
        </authorList>
    </citation>
    <scope>PHOSPHORYLATION [LARGE SCALE ANALYSIS] AT SER-76; SER-576; SER-577; SER-643; SER-647; SER-741; SER-962; SER-1037 AND SER-1040</scope>
    <scope>IDENTIFICATION BY MASS SPECTROMETRY [LARGE SCALE ANALYSIS]</scope>
    <source>
        <tissue>Cervix carcinoma</tissue>
    </source>
</reference>
<reference key="7">
    <citation type="journal article" date="2009" name="Anal. Chem.">
        <title>Lys-N and trypsin cover complementary parts of the phosphoproteome in a refined SCX-based approach.</title>
        <authorList>
            <person name="Gauci S."/>
            <person name="Helbig A.O."/>
            <person name="Slijper M."/>
            <person name="Krijgsveld J."/>
            <person name="Heck A.J."/>
            <person name="Mohammed S."/>
        </authorList>
    </citation>
    <scope>IDENTIFICATION BY MASS SPECTROMETRY [LARGE SCALE ANALYSIS]</scope>
</reference>
<reference key="8">
    <citation type="journal article" date="2010" name="Sci. Signal.">
        <title>Quantitative phosphoproteomics reveals widespread full phosphorylation site occupancy during mitosis.</title>
        <authorList>
            <person name="Olsen J.V."/>
            <person name="Vermeulen M."/>
            <person name="Santamaria A."/>
            <person name="Kumar C."/>
            <person name="Miller M.L."/>
            <person name="Jensen L.J."/>
            <person name="Gnad F."/>
            <person name="Cox J."/>
            <person name="Jensen T.S."/>
            <person name="Nigg E.A."/>
            <person name="Brunak S."/>
            <person name="Mann M."/>
        </authorList>
    </citation>
    <scope>PHOSPHORYLATION [LARGE SCALE ANALYSIS] AT SER-76; SER-576; SER-577; SER-1037 AND SER-1040</scope>
    <scope>IDENTIFICATION BY MASS SPECTROMETRY [LARGE SCALE ANALYSIS]</scope>
    <source>
        <tissue>Cervix carcinoma</tissue>
    </source>
</reference>
<reference key="9">
    <citation type="journal article" date="2011" name="Sci. Signal.">
        <title>System-wide temporal characterization of the proteome and phosphoproteome of human embryonic stem cell differentiation.</title>
        <authorList>
            <person name="Rigbolt K.T."/>
            <person name="Prokhorova T.A."/>
            <person name="Akimov V."/>
            <person name="Henningsen J."/>
            <person name="Johansen P.T."/>
            <person name="Kratchmarova I."/>
            <person name="Kassem M."/>
            <person name="Mann M."/>
            <person name="Olsen J.V."/>
            <person name="Blagoev B."/>
        </authorList>
    </citation>
    <scope>PHOSPHORYLATION [LARGE SCALE ANALYSIS] AT SER-76; SER-576; SER-577; SER-631; SER-640; SER-643; SER-647; SER-741; SER-827; SER-1037 AND SER-1040</scope>
    <scope>IDENTIFICATION BY MASS SPECTROMETRY [LARGE SCALE ANALYSIS]</scope>
</reference>
<reference key="10">
    <citation type="journal article" date="2013" name="J. Proteome Res.">
        <title>Toward a comprehensive characterization of a human cancer cell phosphoproteome.</title>
        <authorList>
            <person name="Zhou H."/>
            <person name="Di Palma S."/>
            <person name="Preisinger C."/>
            <person name="Peng M."/>
            <person name="Polat A.N."/>
            <person name="Heck A.J."/>
            <person name="Mohammed S."/>
        </authorList>
    </citation>
    <scope>PHOSPHORYLATION [LARGE SCALE ANALYSIS] AT SER-76; SER-631; SER-640; SER-643; SER-647; SER-741; SER-827; SER-1037; SER-1040 AND SER-1081</scope>
    <scope>IDENTIFICATION BY MASS SPECTROMETRY [LARGE SCALE ANALYSIS]</scope>
    <source>
        <tissue>Cervix carcinoma</tissue>
    </source>
</reference>
<reference key="11">
    <citation type="journal article" date="2014" name="J. Proteomics">
        <title>An enzyme assisted RP-RPLC approach for in-depth analysis of human liver phosphoproteome.</title>
        <authorList>
            <person name="Bian Y."/>
            <person name="Song C."/>
            <person name="Cheng K."/>
            <person name="Dong M."/>
            <person name="Wang F."/>
            <person name="Huang J."/>
            <person name="Sun D."/>
            <person name="Wang L."/>
            <person name="Ye M."/>
            <person name="Zou H."/>
        </authorList>
    </citation>
    <scope>PHOSPHORYLATION [LARGE SCALE ANALYSIS] AT SER-741 AND SER-1011</scope>
    <scope>IDENTIFICATION BY MASS SPECTROMETRY [LARGE SCALE ANALYSIS]</scope>
    <source>
        <tissue>Liver</tissue>
    </source>
</reference>
<reference key="12">
    <citation type="journal article" date="2014" name="Mol. Cell. Proteomics">
        <title>Immunoaffinity enrichment and mass spectrometry analysis of protein methylation.</title>
        <authorList>
            <person name="Guo A."/>
            <person name="Gu H."/>
            <person name="Zhou J."/>
            <person name="Mulhern D."/>
            <person name="Wang Y."/>
            <person name="Lee K.A."/>
            <person name="Yang V."/>
            <person name="Aguiar M."/>
            <person name="Kornhauser J."/>
            <person name="Jia X."/>
            <person name="Ren J."/>
            <person name="Beausoleil S.A."/>
            <person name="Silva J.C."/>
            <person name="Vemulapalli V."/>
            <person name="Bedford M.T."/>
            <person name="Comb M.J."/>
        </authorList>
    </citation>
    <scope>METHYLATION [LARGE SCALE ANALYSIS] AT ARG-1107</scope>
    <scope>IDENTIFICATION BY MASS SPECTROMETRY [LARGE SCALE ANALYSIS]</scope>
    <source>
        <tissue>Colon carcinoma</tissue>
    </source>
</reference>
<reference key="13">
    <citation type="journal article" date="2016" name="Proc. Natl. Acad. Sci. U.S.A.">
        <title>PLEKHG3 enhances polarized cell migration by activating actin filaments at the cell front.</title>
        <authorList>
            <person name="Nguyen T.T."/>
            <person name="Park W.S."/>
            <person name="Park B.O."/>
            <person name="Kim C.Y."/>
            <person name="Oh Y."/>
            <person name="Kim J.M."/>
            <person name="Choi H."/>
            <person name="Kyung T."/>
            <person name="Kim C.H."/>
            <person name="Lee G."/>
            <person name="Hahn K.M."/>
            <person name="Meyer T."/>
            <person name="Heo W.D."/>
        </authorList>
    </citation>
    <scope>SUBCELLULAR LOCATION</scope>
    <scope>FUNCTION</scope>
</reference>
<protein>
    <recommendedName>
        <fullName>Pleckstrin homology domain-containing family G member 3</fullName>
        <shortName evidence="9">PH domain-containing family G member 3</shortName>
    </recommendedName>
</protein>
<sequence>MPVSTSLHQDGSQERPVSLTSTTSSSGSSCDSRSAMEEPSSSEAPAKNGAGSLRSRHLPNSNNNSSSWLNVKGPLSPFNSRAAAGPAHHKLSYLGRVVREIVETERMYVQDLRSIVEDYLLKIIDTPGLLKPEQVSALFGNIENIYALNSQLLRDLDSCNSDPVAVASCFVERSQEFDIYTQYCNNYPNSVAALTECMRDKQQAKFFRDRQELLQHSLPLGSYLLKPVQRILKYHLLLQEIAKHFDEEEDGFEVVEDAIDTMTCVAWYINDMKRRHEHAVRLQEIQSLLINWKGPDLTTYGELVLEGTFRVHRVRNERTFFLFDKTLLITKKRGDHFVYKGNIPCSSLMLIESTRDSLCFTVTHYKHSKQQYSIQAKTVEEKRNWTHHIKRLILENHHATIPQKAKEAILEMDSYYPNRYRCSPERLKKAWSSQDEVSTNVRQGRRQSEPTKHLLRQLNEKARAAGMKGKGRRESESSRSSRRPSGRSPTSTEKRMSFESISSLPEVEPDPEAGSEQEVFSAVEGPSAEETPSDTESPEVLETQLDAHQGLLGMDPPGDMVDFVAAESTEDLKALSSEEEEEMGGAAQEPESLLPPSVLDQASVIAERFVSSFSRRSSVAQEDSKSSGFGSPRLVSRSSSVLSLEGSEKGLARHGSATDSLSCQLSPEVDISVGVATEDSPSVNGMEPPSPGCPVEPDRSSCKKKESALSTRDRLLLDKIKSYYENAEHHDAGFSVRRRESLSYIPKGLVRNSISRFNSLPRPDPEPVPPVGSKRQVGSRPTSWALFELPGPSQAVKGDPPPISDAEFRPSSEIVKIWEGMESSGGSPGKGPGQGQANGFDLHEPLFILEEHELGAITEESATASPESSSPTEGRSPAHLARELKELVKELSSSTQGELVAPLHPRIVQLSHVMDSHVSERVKNKVYQLARQYSLRIKSNKPVMARPPLQWEKVAPERDGKSPTVPCLQEEAGEPLGGKGKRKPVLSLFDYEQLMAQEHSPPKPSSAGEMSPQRFFFNPSAVSQRTTSPGGRPSARSPLSPTETFSWPDVRELCSKYASRDEARRAGGGRPRGPPVNRSHSVPENMVEPPLSGRVGRCRSLSTKRGRGGGEAAQSPGPLPQSKPDGGETLYVTADLTLEDNRRVIVMEKGPLPSPTAGLEESSGQGPSSPVALLGQVQDFQQSAECQPKEEGSRDPADPSQQGRVRNLREKFQALNSVG</sequence>
<accession>A1L390</accession>
<accession>A1L389</accession>
<accession>B5MEC9</accession>
<accession>O60339</accession>
<accession>Q6GMS3</accession>
<accession>Q6P4B1</accession>
<accession>Q7L3S3</accession>
<accession>Q86SW7</accession>
<accession>Q8TEF5</accession>
<accession>Q96EW6</accession>
<accession>Q9BT82</accession>
<proteinExistence type="evidence at protein level"/>
<name>PKHG3_HUMAN</name>
<evidence type="ECO:0000250" key="1">
    <source>
        <dbReference type="UniProtKB" id="Q4VAC9"/>
    </source>
</evidence>
<evidence type="ECO:0000255" key="2">
    <source>
        <dbReference type="PROSITE-ProRule" id="PRU00062"/>
    </source>
</evidence>
<evidence type="ECO:0000255" key="3">
    <source>
        <dbReference type="PROSITE-ProRule" id="PRU00145"/>
    </source>
</evidence>
<evidence type="ECO:0000256" key="4">
    <source>
        <dbReference type="SAM" id="MobiDB-lite"/>
    </source>
</evidence>
<evidence type="ECO:0000269" key="5">
    <source>
    </source>
</evidence>
<evidence type="ECO:0000269" key="6">
    <source>
    </source>
</evidence>
<evidence type="ECO:0000303" key="7">
    <source>
    </source>
</evidence>
<evidence type="ECO:0000303" key="8">
    <source ref="3"/>
</evidence>
<evidence type="ECO:0000305" key="9"/>
<evidence type="ECO:0000312" key="10">
    <source>
        <dbReference type="HGNC" id="HGNC:20364"/>
    </source>
</evidence>
<evidence type="ECO:0007744" key="11">
    <source>
    </source>
</evidence>
<evidence type="ECO:0007744" key="12">
    <source>
    </source>
</evidence>
<evidence type="ECO:0007744" key="13">
    <source>
    </source>
</evidence>
<evidence type="ECO:0007744" key="14">
    <source>
    </source>
</evidence>
<evidence type="ECO:0007744" key="15">
    <source>
    </source>
</evidence>
<evidence type="ECO:0007744" key="16">
    <source>
    </source>
</evidence>
<gene>
    <name evidence="10" type="primary">PLEKHG3</name>
    <name type="synonym">KIAA0599</name>
</gene>
<dbReference type="EMBL" id="AL121774">
    <property type="status" value="NOT_ANNOTATED_CDS"/>
    <property type="molecule type" value="Genomic_DNA"/>
</dbReference>
<dbReference type="EMBL" id="BC004298">
    <property type="protein sequence ID" value="AAH04298.1"/>
    <property type="molecule type" value="mRNA"/>
</dbReference>
<dbReference type="EMBL" id="BC011891">
    <property type="protein sequence ID" value="AAH11891.2"/>
    <property type="molecule type" value="mRNA"/>
</dbReference>
<dbReference type="EMBL" id="BC063554">
    <property type="protein sequence ID" value="AAH63554.1"/>
    <property type="molecule type" value="mRNA"/>
</dbReference>
<dbReference type="EMBL" id="BC073907">
    <property type="protein sequence ID" value="AAH73907.1"/>
    <property type="molecule type" value="mRNA"/>
</dbReference>
<dbReference type="EMBL" id="BC129952">
    <property type="protein sequence ID" value="AAI29953.1"/>
    <property type="molecule type" value="mRNA"/>
</dbReference>
<dbReference type="EMBL" id="BC129953">
    <property type="protein sequence ID" value="AAI29954.1"/>
    <property type="molecule type" value="mRNA"/>
</dbReference>
<dbReference type="EMBL" id="BX248779">
    <property type="protein sequence ID" value="CAD66586.1"/>
    <property type="status" value="ALT_INIT"/>
    <property type="molecule type" value="mRNA"/>
</dbReference>
<dbReference type="EMBL" id="AK074169">
    <property type="protein sequence ID" value="BAB84995.1"/>
    <property type="status" value="ALT_SEQ"/>
    <property type="molecule type" value="mRNA"/>
</dbReference>
<dbReference type="EMBL" id="AB011171">
    <property type="protein sequence ID" value="BAA25525.1"/>
    <property type="molecule type" value="mRNA"/>
</dbReference>
<dbReference type="CCDS" id="CCDS76690.1">
    <molecule id="A1L390-1"/>
</dbReference>
<dbReference type="PIR" id="T00267">
    <property type="entry name" value="T00267"/>
</dbReference>
<dbReference type="RefSeq" id="NP_001295076.1">
    <molecule id="A1L390-1"/>
    <property type="nucleotide sequence ID" value="NM_001308147.2"/>
</dbReference>
<dbReference type="RefSeq" id="XP_016876646.1">
    <property type="nucleotide sequence ID" value="XM_017021157.1"/>
</dbReference>
<dbReference type="SMR" id="A1L390"/>
<dbReference type="BioGRID" id="117496">
    <property type="interactions" value="115"/>
</dbReference>
<dbReference type="FunCoup" id="A1L390">
    <property type="interactions" value="909"/>
</dbReference>
<dbReference type="IntAct" id="A1L390">
    <property type="interactions" value="74"/>
</dbReference>
<dbReference type="MINT" id="A1L390"/>
<dbReference type="STRING" id="9606.ENSP00000247226"/>
<dbReference type="GlyGen" id="A1L390">
    <property type="glycosylation" value="1 site"/>
</dbReference>
<dbReference type="iPTMnet" id="A1L390"/>
<dbReference type="PhosphoSitePlus" id="A1L390"/>
<dbReference type="BioMuta" id="PLEKHG3"/>
<dbReference type="jPOST" id="A1L390"/>
<dbReference type="MassIVE" id="A1L390"/>
<dbReference type="PaxDb" id="9606-ENSP00000247226"/>
<dbReference type="PeptideAtlas" id="A1L390"/>
<dbReference type="ProteomicsDB" id="140">
    <molecule id="A1L390-1"/>
</dbReference>
<dbReference type="ProteomicsDB" id="141">
    <molecule id="A1L390-2"/>
</dbReference>
<dbReference type="ProteomicsDB" id="142">
    <molecule id="A1L390-3"/>
</dbReference>
<dbReference type="Pumba" id="A1L390"/>
<dbReference type="Antibodypedia" id="57155">
    <property type="antibodies" value="78 antibodies from 11 providers"/>
</dbReference>
<dbReference type="DNASU" id="26030"/>
<dbReference type="Ensembl" id="ENST00000247226.13">
    <molecule id="A1L390-1"/>
    <property type="protein sequence ID" value="ENSP00000247226.8"/>
    <property type="gene ID" value="ENSG00000126822.18"/>
</dbReference>
<dbReference type="Ensembl" id="ENST00000394691.7">
    <molecule id="A1L390-3"/>
    <property type="protein sequence ID" value="ENSP00000378183.2"/>
    <property type="gene ID" value="ENSG00000126822.18"/>
</dbReference>
<dbReference type="GeneID" id="26030"/>
<dbReference type="KEGG" id="hsa:26030"/>
<dbReference type="MANE-Select" id="ENST00000247226.13">
    <property type="protein sequence ID" value="ENSP00000247226.8"/>
    <property type="RefSeq nucleotide sequence ID" value="NM_001308147.2"/>
    <property type="RefSeq protein sequence ID" value="NP_001295076.1"/>
</dbReference>
<dbReference type="UCSC" id="uc001xhn.2">
    <molecule id="A1L390-1"/>
    <property type="organism name" value="human"/>
</dbReference>
<dbReference type="AGR" id="HGNC:20364"/>
<dbReference type="CTD" id="26030"/>
<dbReference type="DisGeNET" id="26030"/>
<dbReference type="GeneCards" id="PLEKHG3"/>
<dbReference type="HGNC" id="HGNC:20364">
    <property type="gene designation" value="PLEKHG3"/>
</dbReference>
<dbReference type="HPA" id="ENSG00000126822">
    <property type="expression patterns" value="Low tissue specificity"/>
</dbReference>
<dbReference type="MIM" id="617940">
    <property type="type" value="gene"/>
</dbReference>
<dbReference type="neXtProt" id="NX_A1L390"/>
<dbReference type="OpenTargets" id="ENSG00000126822"/>
<dbReference type="PharmGKB" id="PA134925358"/>
<dbReference type="VEuPathDB" id="HostDB:ENSG00000126822"/>
<dbReference type="eggNOG" id="KOG3518">
    <property type="taxonomic scope" value="Eukaryota"/>
</dbReference>
<dbReference type="GeneTree" id="ENSGT00940000156521"/>
<dbReference type="HOGENOM" id="CLU_007600_0_0_1"/>
<dbReference type="InParanoid" id="A1L390"/>
<dbReference type="OMA" id="VKMWERM"/>
<dbReference type="OrthoDB" id="1594986at2759"/>
<dbReference type="PAN-GO" id="A1L390">
    <property type="GO annotations" value="0 GO annotations based on evolutionary models"/>
</dbReference>
<dbReference type="PhylomeDB" id="A1L390"/>
<dbReference type="TreeFam" id="TF328565"/>
<dbReference type="PathwayCommons" id="A1L390"/>
<dbReference type="Reactome" id="R-HSA-8980692">
    <property type="pathway name" value="RHOA GTPase cycle"/>
</dbReference>
<dbReference type="Reactome" id="R-HSA-9013148">
    <property type="pathway name" value="CDC42 GTPase cycle"/>
</dbReference>
<dbReference type="Reactome" id="R-HSA-9013149">
    <property type="pathway name" value="RAC1 GTPase cycle"/>
</dbReference>
<dbReference type="Reactome" id="R-HSA-9013406">
    <property type="pathway name" value="RHOQ GTPase cycle"/>
</dbReference>
<dbReference type="Reactome" id="R-HSA-9013408">
    <property type="pathway name" value="RHOG GTPase cycle"/>
</dbReference>
<dbReference type="SignaLink" id="A1L390"/>
<dbReference type="SIGNOR" id="A1L390"/>
<dbReference type="BioGRID-ORCS" id="26030">
    <property type="hits" value="123 hits in 1144 CRISPR screens"/>
</dbReference>
<dbReference type="GenomeRNAi" id="26030"/>
<dbReference type="Pharos" id="A1L390">
    <property type="development level" value="Tbio"/>
</dbReference>
<dbReference type="PRO" id="PR:A1L390"/>
<dbReference type="Proteomes" id="UP000005640">
    <property type="component" value="Chromosome 14"/>
</dbReference>
<dbReference type="RNAct" id="A1L390">
    <property type="molecule type" value="protein"/>
</dbReference>
<dbReference type="Bgee" id="ENSG00000126822">
    <property type="expression patterns" value="Expressed in sural nerve and 171 other cell types or tissues"/>
</dbReference>
<dbReference type="ExpressionAtlas" id="A1L390">
    <property type="expression patterns" value="baseline and differential"/>
</dbReference>
<dbReference type="GO" id="GO:0005856">
    <property type="term" value="C:cytoskeleton"/>
    <property type="evidence" value="ECO:0007669"/>
    <property type="project" value="UniProtKB-SubCell"/>
</dbReference>
<dbReference type="GO" id="GO:0005829">
    <property type="term" value="C:cytosol"/>
    <property type="evidence" value="ECO:0000304"/>
    <property type="project" value="Reactome"/>
</dbReference>
<dbReference type="GO" id="GO:0003779">
    <property type="term" value="F:actin binding"/>
    <property type="evidence" value="ECO:0000314"/>
    <property type="project" value="UniProtKB"/>
</dbReference>
<dbReference type="GO" id="GO:0005085">
    <property type="term" value="F:guanyl-nucleotide exchange factor activity"/>
    <property type="evidence" value="ECO:0000318"/>
    <property type="project" value="GO_Central"/>
</dbReference>
<dbReference type="GO" id="GO:0031267">
    <property type="term" value="F:small GTPase binding"/>
    <property type="evidence" value="ECO:0000318"/>
    <property type="project" value="GO_Central"/>
</dbReference>
<dbReference type="GO" id="GO:0030334">
    <property type="term" value="P:regulation of cell migration"/>
    <property type="evidence" value="ECO:0000315"/>
    <property type="project" value="UniProtKB"/>
</dbReference>
<dbReference type="GO" id="GO:2000114">
    <property type="term" value="P:regulation of establishment of cell polarity"/>
    <property type="evidence" value="ECO:0000314"/>
    <property type="project" value="UniProtKB"/>
</dbReference>
<dbReference type="GO" id="GO:0051056">
    <property type="term" value="P:regulation of small GTPase mediated signal transduction"/>
    <property type="evidence" value="ECO:0000304"/>
    <property type="project" value="Reactome"/>
</dbReference>
<dbReference type="CDD" id="cd13243">
    <property type="entry name" value="PH_PLEKHG1_G2_G3"/>
    <property type="match status" value="1"/>
</dbReference>
<dbReference type="CDD" id="cd00160">
    <property type="entry name" value="RhoGEF"/>
    <property type="match status" value="1"/>
</dbReference>
<dbReference type="FunFam" id="1.20.900.10:FF:000019">
    <property type="entry name" value="Pleckstrin homology domain-containing family G member 1"/>
    <property type="match status" value="1"/>
</dbReference>
<dbReference type="Gene3D" id="1.20.900.10">
    <property type="entry name" value="Dbl homology (DH) domain"/>
    <property type="match status" value="1"/>
</dbReference>
<dbReference type="Gene3D" id="2.30.29.30">
    <property type="entry name" value="Pleckstrin-homology domain (PH domain)/Phosphotyrosine-binding domain (PTB)"/>
    <property type="match status" value="1"/>
</dbReference>
<dbReference type="InterPro" id="IPR035899">
    <property type="entry name" value="DBL_dom_sf"/>
</dbReference>
<dbReference type="InterPro" id="IPR000219">
    <property type="entry name" value="DH_dom"/>
</dbReference>
<dbReference type="InterPro" id="IPR011993">
    <property type="entry name" value="PH-like_dom_sf"/>
</dbReference>
<dbReference type="InterPro" id="IPR001849">
    <property type="entry name" value="PH_domain"/>
</dbReference>
<dbReference type="InterPro" id="IPR043324">
    <property type="entry name" value="PH_PLEKHG1_G2_G3"/>
</dbReference>
<dbReference type="InterPro" id="IPR055251">
    <property type="entry name" value="SOS1_NGEF_PH"/>
</dbReference>
<dbReference type="PANTHER" id="PTHR45924">
    <property type="entry name" value="FI17866P1"/>
    <property type="match status" value="1"/>
</dbReference>
<dbReference type="PANTHER" id="PTHR45924:SF4">
    <property type="entry name" value="PLECKSTRIN HOMOLOGY DOMAIN-CONTAINING FAMILY G MEMBER 3"/>
    <property type="match status" value="1"/>
</dbReference>
<dbReference type="Pfam" id="PF00621">
    <property type="entry name" value="RhoGEF"/>
    <property type="match status" value="1"/>
</dbReference>
<dbReference type="Pfam" id="PF22697">
    <property type="entry name" value="SOS1_NGEF_PH"/>
    <property type="match status" value="1"/>
</dbReference>
<dbReference type="SMART" id="SM00233">
    <property type="entry name" value="PH"/>
    <property type="match status" value="1"/>
</dbReference>
<dbReference type="SMART" id="SM00325">
    <property type="entry name" value="RhoGEF"/>
    <property type="match status" value="1"/>
</dbReference>
<dbReference type="SUPFAM" id="SSF48065">
    <property type="entry name" value="DBL homology domain (DH-domain)"/>
    <property type="match status" value="1"/>
</dbReference>
<dbReference type="SUPFAM" id="SSF50729">
    <property type="entry name" value="PH domain-like"/>
    <property type="match status" value="1"/>
</dbReference>
<dbReference type="PROSITE" id="PS50010">
    <property type="entry name" value="DH_2"/>
    <property type="match status" value="1"/>
</dbReference>
<dbReference type="PROSITE" id="PS50003">
    <property type="entry name" value="PH_DOMAIN"/>
    <property type="match status" value="1"/>
</dbReference>
<organism>
    <name type="scientific">Homo sapiens</name>
    <name type="common">Human</name>
    <dbReference type="NCBI Taxonomy" id="9606"/>
    <lineage>
        <taxon>Eukaryota</taxon>
        <taxon>Metazoa</taxon>
        <taxon>Chordata</taxon>
        <taxon>Craniata</taxon>
        <taxon>Vertebrata</taxon>
        <taxon>Euteleostomi</taxon>
        <taxon>Mammalia</taxon>
        <taxon>Eutheria</taxon>
        <taxon>Euarchontoglires</taxon>
        <taxon>Primates</taxon>
        <taxon>Haplorrhini</taxon>
        <taxon>Catarrhini</taxon>
        <taxon>Hominidae</taxon>
        <taxon>Homo</taxon>
    </lineage>
</organism>
<comment type="function">
    <text evidence="6">Plays a role in controlling cell polarity and cell motility by selectively binding newly polymerized actin and activating RAC1 and CDC42 to enhance local actin polymerization.</text>
</comment>
<comment type="subcellular location">
    <subcellularLocation>
        <location evidence="6">Cytoplasm</location>
        <location evidence="6">Cytoskeleton</location>
    </subcellularLocation>
    <text evidence="6">Colocalizes with actin at the leading edge of polarized cells.</text>
</comment>
<comment type="alternative products">
    <event type="alternative splicing"/>
    <isoform>
        <id>A1L390-1</id>
        <name>1</name>
        <sequence type="displayed"/>
    </isoform>
    <isoform>
        <id>A1L390-2</id>
        <name>2</name>
        <sequence type="described" ref="VSP_028533 VSP_041513"/>
    </isoform>
    <isoform>
        <id>A1L390-3</id>
        <name>3</name>
        <sequence type="described" ref="VSP_028534"/>
    </isoform>
</comment>
<comment type="sequence caution" evidence="9">
    <conflict type="miscellaneous discrepancy">
        <sequence resource="EMBL-CDS" id="BAB84995"/>
    </conflict>
    <text>Intron retention. There are two regions of intron retention within the sequence which cause it to shift frame.</text>
</comment>
<comment type="sequence caution" evidence="9">
    <conflict type="erroneous initiation">
        <sequence resource="EMBL-CDS" id="CAD66586"/>
    </conflict>
    <text>Extended N-terminus.</text>
</comment>